<gene>
    <name evidence="11" type="primary">SRFR1</name>
    <name evidence="12" type="synonym">SNC5</name>
    <name evidence="14" type="ordered locus">At4g37460</name>
    <name evidence="15" type="ORF">F6G17.110</name>
</gene>
<sequence length="1052" mass="118107">MATATATSERFELAKHCSSRNWSKAIRVLDSLLAKESSILDICNRAFCYNQLELHKHVIKDCDKALLLEPFAIQAFILKGRALLALGRKQEAVLVLEQGYKSALQQTADVKQLLELEELLKDARREIDGILKSHATESPQETPAYHSEKSDEKSDKLDNHESGASSNGNSHESSSELGEQSKIVSFSKVASKASKQSDGNSDLCNGSVYKEKENGKCGSQINGYYESCKPCNGSDLHDNLAESSDRFGELSINGNKISIKSSKMSHKAEARCGISDESRKNKKYTIARISGTHSISVDFRLSRGIAQVNEGNYTKAISIFDKVLKEEPTYPEALIGRGTAYAFQRELESAIADFTKAIQSNPAASEAWKRRGQARAALGEYVEAVEDLTKALVFEPNSPDVLHERGIVNFKSKDFTAAVKDLSICLKQEKDNKSAYTYLGLAFASLGEYKKAEEAHLKSIQLDSNYLEAWLHLAQFYQELADHCKALECIEQVLQVDNRVWKAYHLRGLVFHGLGEHRKAIQELSIGLSIENTIECLYLRGSCYHAVGEYRDAVKDYDATVDVELDAVEKFVLQCLAFYQKELALYTASKVSSEFLCFDIDGDIDPMFKEYWCKRLHPKNVCEKVYRQPPLRESLKKGKLKKQDLAITKQKANILRFADLIGKRIQYDCPGFLPNKRQHRMAGLAVIEIAQKVSKAWRIEWRNSTKGTTKNGKKNRRRERTNILSQNRGGAGCSSSSFSETSTGYASLEDRSSGRSILSWQDVYSPAVRWRQISEPCDPVVWVNKLSEEFNSGFGSHTPMVLGQAKVVRYFPNYERTLTLAKSIIKDKLSVRSKKDKVIDLSKDEKIEKIMRAETCDELHNIVGEDFWVATWCDSTGSEGKRLEGTRITCIQKPGRLGYDFSIRTPCTPARWSDFDEEMTSAWEALCTAYCGENYGSTELDALETVRDAILRMTYYWYNFMPLARGTAVTGFVVLLGLLLAANMEFTETIPKGLQIDWEAILNVEPGSFVDSVKSWLYPSLKINTSWRDHTEISSAFSTTGAVVAALSTYND</sequence>
<protein>
    <recommendedName>
        <fullName evidence="11">Suppressor of RPS4-RLD 1</fullName>
    </recommendedName>
    <alternativeName>
        <fullName evidence="12">Protein SUPPRESSOR OF npr1-1, CONSTITUTIVE 5</fullName>
        <shortName evidence="12">AtSNC5</shortName>
    </alternativeName>
</protein>
<proteinExistence type="evidence at protein level"/>
<evidence type="ECO:0000255" key="1"/>
<evidence type="ECO:0000256" key="2">
    <source>
        <dbReference type="SAM" id="MobiDB-lite"/>
    </source>
</evidence>
<evidence type="ECO:0000269" key="3">
    <source>
    </source>
</evidence>
<evidence type="ECO:0000269" key="4">
    <source>
    </source>
</evidence>
<evidence type="ECO:0000269" key="5">
    <source>
    </source>
</evidence>
<evidence type="ECO:0000269" key="6">
    <source>
    </source>
</evidence>
<evidence type="ECO:0000269" key="7">
    <source>
    </source>
</evidence>
<evidence type="ECO:0000269" key="8">
    <source>
    </source>
</evidence>
<evidence type="ECO:0000269" key="9">
    <source>
    </source>
</evidence>
<evidence type="ECO:0000269" key="10">
    <source>
    </source>
</evidence>
<evidence type="ECO:0000303" key="11">
    <source>
    </source>
</evidence>
<evidence type="ECO:0000303" key="12">
    <source>
    </source>
</evidence>
<evidence type="ECO:0000305" key="13"/>
<evidence type="ECO:0000312" key="14">
    <source>
        <dbReference type="Araport" id="AT4G37460"/>
    </source>
</evidence>
<evidence type="ECO:0000312" key="15">
    <source>
        <dbReference type="EMBL" id="CAB38213.1"/>
    </source>
</evidence>
<evidence type="ECO:0000312" key="16">
    <source>
        <dbReference type="Proteomes" id="UP000006548"/>
    </source>
</evidence>
<evidence type="ECO:0007744" key="17">
    <source>
    </source>
</evidence>
<reference key="1">
    <citation type="journal article" date="1999" name="Nature">
        <title>Sequence and analysis of chromosome 4 of the plant Arabidopsis thaliana.</title>
        <authorList>
            <person name="Mayer K.F.X."/>
            <person name="Schueller C."/>
            <person name="Wambutt R."/>
            <person name="Murphy G."/>
            <person name="Volckaert G."/>
            <person name="Pohl T."/>
            <person name="Duesterhoeft A."/>
            <person name="Stiekema W."/>
            <person name="Entian K.-D."/>
            <person name="Terryn N."/>
            <person name="Harris B."/>
            <person name="Ansorge W."/>
            <person name="Brandt P."/>
            <person name="Grivell L.A."/>
            <person name="Rieger M."/>
            <person name="Weichselgartner M."/>
            <person name="de Simone V."/>
            <person name="Obermaier B."/>
            <person name="Mache R."/>
            <person name="Mueller M."/>
            <person name="Kreis M."/>
            <person name="Delseny M."/>
            <person name="Puigdomenech P."/>
            <person name="Watson M."/>
            <person name="Schmidtheini T."/>
            <person name="Reichert B."/>
            <person name="Portetelle D."/>
            <person name="Perez-Alonso M."/>
            <person name="Boutry M."/>
            <person name="Bancroft I."/>
            <person name="Vos P."/>
            <person name="Hoheisel J."/>
            <person name="Zimmermann W."/>
            <person name="Wedler H."/>
            <person name="Ridley P."/>
            <person name="Langham S.-A."/>
            <person name="McCullagh B."/>
            <person name="Bilham L."/>
            <person name="Robben J."/>
            <person name="van der Schueren J."/>
            <person name="Grymonprez B."/>
            <person name="Chuang Y.-J."/>
            <person name="Vandenbussche F."/>
            <person name="Braeken M."/>
            <person name="Weltjens I."/>
            <person name="Voet M."/>
            <person name="Bastiaens I."/>
            <person name="Aert R."/>
            <person name="Defoor E."/>
            <person name="Weitzenegger T."/>
            <person name="Bothe G."/>
            <person name="Ramsperger U."/>
            <person name="Hilbert H."/>
            <person name="Braun M."/>
            <person name="Holzer E."/>
            <person name="Brandt A."/>
            <person name="Peters S."/>
            <person name="van Staveren M."/>
            <person name="Dirkse W."/>
            <person name="Mooijman P."/>
            <person name="Klein Lankhorst R."/>
            <person name="Rose M."/>
            <person name="Hauf J."/>
            <person name="Koetter P."/>
            <person name="Berneiser S."/>
            <person name="Hempel S."/>
            <person name="Feldpausch M."/>
            <person name="Lamberth S."/>
            <person name="Van den Daele H."/>
            <person name="De Keyser A."/>
            <person name="Buysshaert C."/>
            <person name="Gielen J."/>
            <person name="Villarroel R."/>
            <person name="De Clercq R."/>
            <person name="van Montagu M."/>
            <person name="Rogers J."/>
            <person name="Cronin A."/>
            <person name="Quail M.A."/>
            <person name="Bray-Allen S."/>
            <person name="Clark L."/>
            <person name="Doggett J."/>
            <person name="Hall S."/>
            <person name="Kay M."/>
            <person name="Lennard N."/>
            <person name="McLay K."/>
            <person name="Mayes R."/>
            <person name="Pettett A."/>
            <person name="Rajandream M.A."/>
            <person name="Lyne M."/>
            <person name="Benes V."/>
            <person name="Rechmann S."/>
            <person name="Borkova D."/>
            <person name="Bloecker H."/>
            <person name="Scharfe M."/>
            <person name="Grimm M."/>
            <person name="Loehnert T.-H."/>
            <person name="Dose S."/>
            <person name="de Haan M."/>
            <person name="Maarse A.C."/>
            <person name="Schaefer M."/>
            <person name="Mueller-Auer S."/>
            <person name="Gabel C."/>
            <person name="Fuchs M."/>
            <person name="Fartmann B."/>
            <person name="Granderath K."/>
            <person name="Dauner D."/>
            <person name="Herzl A."/>
            <person name="Neumann S."/>
            <person name="Argiriou A."/>
            <person name="Vitale D."/>
            <person name="Liguori R."/>
            <person name="Piravandi E."/>
            <person name="Massenet O."/>
            <person name="Quigley F."/>
            <person name="Clabauld G."/>
            <person name="Muendlein A."/>
            <person name="Felber R."/>
            <person name="Schnabl S."/>
            <person name="Hiller R."/>
            <person name="Schmidt W."/>
            <person name="Lecharny A."/>
            <person name="Aubourg S."/>
            <person name="Chefdor F."/>
            <person name="Cooke R."/>
            <person name="Berger C."/>
            <person name="Monfort A."/>
            <person name="Casacuberta E."/>
            <person name="Gibbons T."/>
            <person name="Weber N."/>
            <person name="Vandenbol M."/>
            <person name="Bargues M."/>
            <person name="Terol J."/>
            <person name="Torres A."/>
            <person name="Perez-Perez A."/>
            <person name="Purnelle B."/>
            <person name="Bent E."/>
            <person name="Johnson S."/>
            <person name="Tacon D."/>
            <person name="Jesse T."/>
            <person name="Heijnen L."/>
            <person name="Schwarz S."/>
            <person name="Scholler P."/>
            <person name="Heber S."/>
            <person name="Francs P."/>
            <person name="Bielke C."/>
            <person name="Frishman D."/>
            <person name="Haase D."/>
            <person name="Lemcke K."/>
            <person name="Mewes H.-W."/>
            <person name="Stocker S."/>
            <person name="Zaccaria P."/>
            <person name="Bevan M."/>
            <person name="Wilson R.K."/>
            <person name="de la Bastide M."/>
            <person name="Habermann K."/>
            <person name="Parnell L."/>
            <person name="Dedhia N."/>
            <person name="Gnoj L."/>
            <person name="Schutz K."/>
            <person name="Huang E."/>
            <person name="Spiegel L."/>
            <person name="Sekhon M."/>
            <person name="Murray J."/>
            <person name="Sheet P."/>
            <person name="Cordes M."/>
            <person name="Abu-Threideh J."/>
            <person name="Stoneking T."/>
            <person name="Kalicki J."/>
            <person name="Graves T."/>
            <person name="Harmon G."/>
            <person name="Edwards J."/>
            <person name="Latreille P."/>
            <person name="Courtney L."/>
            <person name="Cloud J."/>
            <person name="Abbott A."/>
            <person name="Scott K."/>
            <person name="Johnson D."/>
            <person name="Minx P."/>
            <person name="Bentley D."/>
            <person name="Fulton B."/>
            <person name="Miller N."/>
            <person name="Greco T."/>
            <person name="Kemp K."/>
            <person name="Kramer J."/>
            <person name="Fulton L."/>
            <person name="Mardis E."/>
            <person name="Dante M."/>
            <person name="Pepin K."/>
            <person name="Hillier L.W."/>
            <person name="Nelson J."/>
            <person name="Spieth J."/>
            <person name="Ryan E."/>
            <person name="Andrews S."/>
            <person name="Geisel C."/>
            <person name="Layman D."/>
            <person name="Du H."/>
            <person name="Ali J."/>
            <person name="Berghoff A."/>
            <person name="Jones K."/>
            <person name="Drone K."/>
            <person name="Cotton M."/>
            <person name="Joshu C."/>
            <person name="Antonoiu B."/>
            <person name="Zidanic M."/>
            <person name="Strong C."/>
            <person name="Sun H."/>
            <person name="Lamar B."/>
            <person name="Yordan C."/>
            <person name="Ma P."/>
            <person name="Zhong J."/>
            <person name="Preston R."/>
            <person name="Vil D."/>
            <person name="Shekher M."/>
            <person name="Matero A."/>
            <person name="Shah R."/>
            <person name="Swaby I.K."/>
            <person name="O'Shaughnessy A."/>
            <person name="Rodriguez M."/>
            <person name="Hoffman J."/>
            <person name="Till S."/>
            <person name="Granat S."/>
            <person name="Shohdy N."/>
            <person name="Hasegawa A."/>
            <person name="Hameed A."/>
            <person name="Lodhi M."/>
            <person name="Johnson A."/>
            <person name="Chen E."/>
            <person name="Marra M.A."/>
            <person name="Martienssen R."/>
            <person name="McCombie W.R."/>
        </authorList>
    </citation>
    <scope>NUCLEOTIDE SEQUENCE [LARGE SCALE GENOMIC DNA]</scope>
    <source>
        <strain>cv. Columbia</strain>
    </source>
</reference>
<reference key="2">
    <citation type="journal article" date="2017" name="Plant J.">
        <title>Araport11: a complete reannotation of the Arabidopsis thaliana reference genome.</title>
        <authorList>
            <person name="Cheng C.Y."/>
            <person name="Krishnakumar V."/>
            <person name="Chan A.P."/>
            <person name="Thibaud-Nissen F."/>
            <person name="Schobel S."/>
            <person name="Town C.D."/>
        </authorList>
    </citation>
    <scope>GENOME REANNOTATION</scope>
    <source>
        <strain>cv. Columbia</strain>
    </source>
</reference>
<reference key="3">
    <citation type="journal article" date="2002" name="Science">
        <title>Functional annotation of a full-length Arabidopsis cDNA collection.</title>
        <authorList>
            <person name="Seki M."/>
            <person name="Narusaka M."/>
            <person name="Kamiya A."/>
            <person name="Ishida J."/>
            <person name="Satou M."/>
            <person name="Sakurai T."/>
            <person name="Nakajima M."/>
            <person name="Enju A."/>
            <person name="Akiyama K."/>
            <person name="Oono Y."/>
            <person name="Muramatsu M."/>
            <person name="Hayashizaki Y."/>
            <person name="Kawai J."/>
            <person name="Carninci P."/>
            <person name="Itoh M."/>
            <person name="Ishii Y."/>
            <person name="Arakawa T."/>
            <person name="Shibata K."/>
            <person name="Shinagawa A."/>
            <person name="Shinozaki K."/>
        </authorList>
    </citation>
    <scope>NUCLEOTIDE SEQUENCE [LARGE SCALE MRNA] (ISOFORM 2)</scope>
    <source>
        <strain>cv. Columbia</strain>
    </source>
</reference>
<reference key="4">
    <citation type="journal article" date="2003" name="Science">
        <title>Empirical analysis of transcriptional activity in the Arabidopsis genome.</title>
        <authorList>
            <person name="Yamada K."/>
            <person name="Lim J."/>
            <person name="Dale J.M."/>
            <person name="Chen H."/>
            <person name="Shinn P."/>
            <person name="Palm C.J."/>
            <person name="Southwick A.M."/>
            <person name="Wu H.C."/>
            <person name="Kim C.J."/>
            <person name="Nguyen M."/>
            <person name="Pham P.K."/>
            <person name="Cheuk R.F."/>
            <person name="Karlin-Newmann G."/>
            <person name="Liu S.X."/>
            <person name="Lam B."/>
            <person name="Sakano H."/>
            <person name="Wu T."/>
            <person name="Yu G."/>
            <person name="Miranda M."/>
            <person name="Quach H.L."/>
            <person name="Tripp M."/>
            <person name="Chang C.H."/>
            <person name="Lee J.M."/>
            <person name="Toriumi M.J."/>
            <person name="Chan M.M."/>
            <person name="Tang C.C."/>
            <person name="Onodera C.S."/>
            <person name="Deng J.M."/>
            <person name="Akiyama K."/>
            <person name="Ansari Y."/>
            <person name="Arakawa T."/>
            <person name="Banh J."/>
            <person name="Banno F."/>
            <person name="Bowser L."/>
            <person name="Brooks S.Y."/>
            <person name="Carninci P."/>
            <person name="Chao Q."/>
            <person name="Choy N."/>
            <person name="Enju A."/>
            <person name="Goldsmith A.D."/>
            <person name="Gurjal M."/>
            <person name="Hansen N.F."/>
            <person name="Hayashizaki Y."/>
            <person name="Johnson-Hopson C."/>
            <person name="Hsuan V.W."/>
            <person name="Iida K."/>
            <person name="Karnes M."/>
            <person name="Khan S."/>
            <person name="Koesema E."/>
            <person name="Ishida J."/>
            <person name="Jiang P.X."/>
            <person name="Jones T."/>
            <person name="Kawai J."/>
            <person name="Kamiya A."/>
            <person name="Meyers C."/>
            <person name="Nakajima M."/>
            <person name="Narusaka M."/>
            <person name="Seki M."/>
            <person name="Sakurai T."/>
            <person name="Satou M."/>
            <person name="Tamse R."/>
            <person name="Vaysberg M."/>
            <person name="Wallender E.K."/>
            <person name="Wong C."/>
            <person name="Yamamura Y."/>
            <person name="Yuan S."/>
            <person name="Shinozaki K."/>
            <person name="Davis R.W."/>
            <person name="Theologis A."/>
            <person name="Ecker J.R."/>
        </authorList>
    </citation>
    <scope>NUCLEOTIDE SEQUENCE [LARGE SCALE MRNA] (ISOFORM 2)</scope>
    <source>
        <strain>cv. Columbia</strain>
    </source>
</reference>
<reference key="5">
    <citation type="journal article" date="2004" name="Plant J.">
        <title>Two Arabidopsis srfr (suppressor of rps4-RLD) mutants exhibit avrRps4-specific disease resistance independent of RPS4.</title>
        <authorList>
            <person name="Kwon S.I."/>
            <person name="Koczan J.M."/>
            <person name="Gassmann W."/>
        </authorList>
    </citation>
    <scope>FUNCTION</scope>
    <source>
        <strain>cv. RLD</strain>
    </source>
</reference>
<reference key="6">
    <citation type="journal article" date="2009" name="Plant J.">
        <title>SRFR1, a suppressor of effector-triggered immunity, encodes a conserved tetratricopeptide repeat protein with similarity to transcriptional repressors.</title>
        <authorList>
            <person name="Kwon S.I."/>
            <person name="Kim S.H."/>
            <person name="Bhattacharjee S."/>
            <person name="Noh J.J."/>
            <person name="Gassmann W."/>
        </authorList>
    </citation>
    <scope>IDENTIFICATION</scope>
    <scope>FUNCTION</scope>
    <scope>SUBCELLULAR LOCATION</scope>
    <scope>SUBUNIT</scope>
    <scope>TISSUE SPECIFICITY</scope>
    <source>
        <strain>cv. RLD</strain>
    </source>
</reference>
<reference key="7">
    <citation type="journal article" date="2009" name="Plant Signal. Behav.">
        <title>Regulation of defense gene expression by Arabidopsis SRFR1.</title>
        <authorList>
            <person name="Kim S.H."/>
            <person name="Kwon S.I."/>
            <person name="Bhattacharjee S."/>
            <person name="Gassmann W."/>
        </authorList>
    </citation>
    <scope>FUNCTION</scope>
    <source>
        <strain>cv. RLD</strain>
    </source>
</reference>
<reference key="8">
    <citation type="journal article" date="2009" name="Plant Physiol.">
        <title>Resistance to the Pseudomonas syringae effector HopA1 is governed by the TIR-NBS-LRR protein RPS6 and is enhanced by mutations in SRFR1.</title>
        <authorList>
            <person name="Kim S.H."/>
            <person name="Kwon S.I."/>
            <person name="Saha D."/>
            <person name="Anyanwu N.C."/>
            <person name="Gassmann W."/>
        </authorList>
    </citation>
    <scope>FUNCTION</scope>
</reference>
<reference key="9">
    <citation type="journal article" date="2010" name="PLoS Pathog.">
        <title>SRFR1 negatively regulates plant NB-LRR resistance protein accumulation to prevent autoimmunity.</title>
        <authorList>
            <person name="Li Y."/>
            <person name="Li S."/>
            <person name="Bi D."/>
            <person name="Cheng Y.T."/>
            <person name="Li X."/>
            <person name="Zhang Y."/>
        </authorList>
    </citation>
    <scope>FUNCTION</scope>
    <scope>INTERACTION WITH SGT1</scope>
</reference>
<reference key="10">
    <citation type="journal article" date="2010" name="PLoS Pathog.">
        <title>The Arabidopsis resistance-like gene SNC1 is activated by mutations in SRFR1 and contributes to resistance to the bacterial effector AvrRps4.</title>
        <authorList>
            <person name="Kim S.H."/>
            <person name="Gao F."/>
            <person name="Bhattacharjee S."/>
            <person name="Adiasor J.A."/>
            <person name="Nam J.C."/>
            <person name="Gassmann W."/>
        </authorList>
    </citation>
    <scope>FUNCTION</scope>
    <scope>DISRUPTION PHENOTYPE</scope>
    <scope>SUBCELLULAR LOCATION</scope>
    <scope>INTERACTION WITH SNC1 AND RPS4</scope>
</reference>
<reference key="11">
    <citation type="journal article" date="2011" name="Science">
        <title>Pathogen effectors target Arabidopsis EDS1 and alter its interactions with immune regulators.</title>
        <authorList>
            <person name="Bhattacharjee S."/>
            <person name="Halane M.K."/>
            <person name="Kim S.H."/>
            <person name="Gassmann W."/>
        </authorList>
    </citation>
    <scope>FUNCTION</scope>
    <scope>INTERACTION WITH EDS1</scope>
    <scope>SUBCELLULAR LOCATION</scope>
</reference>
<reference key="12">
    <citation type="journal article" date="2012" name="Mol. Cell. Proteomics">
        <title>Comparative large-scale characterisation of plant vs. mammal proteins reveals similar and idiosyncratic N-alpha acetylation features.</title>
        <authorList>
            <person name="Bienvenut W.V."/>
            <person name="Sumpton D."/>
            <person name="Martinez A."/>
            <person name="Lilla S."/>
            <person name="Espagne C."/>
            <person name="Meinnel T."/>
            <person name="Giglione C."/>
        </authorList>
    </citation>
    <scope>ACETYLATION [LARGE SCALE ANALYSIS] AT ALA-2</scope>
    <scope>CLEAVAGE OF INITIATOR METHIONINE [LARGE SCALE ANALYSIS]</scope>
    <scope>IDENTIFICATION BY MASS SPECTROMETRY [LARGE SCALE ANALYSIS]</scope>
</reference>
<reference key="13">
    <citation type="journal article" date="2014" name="Plant J.">
        <title>The Arabidopsis immune adaptor SRFR1 interacts with TCP transcription factors that redundantly contribute to effector-triggered immunity.</title>
        <authorList>
            <person name="Kim S.H."/>
            <person name="Son G.H."/>
            <person name="Bhattacharjee S."/>
            <person name="Kim H.J."/>
            <person name="Nam J.C."/>
            <person name="Nguyen P.D."/>
            <person name="Hong J.C."/>
            <person name="Gassmann W."/>
        </authorList>
    </citation>
    <scope>INTERACTION WITH TCP8; TCP14; TCP15; TCP20; TCP22 AND TCP23</scope>
</reference>
<accession>F4JS25</accession>
<accession>Q8GYX1</accession>
<accession>Q9SZU6</accession>
<feature type="initiator methionine" description="Removed" evidence="17">
    <location>
        <position position="1"/>
    </location>
</feature>
<feature type="chain" id="PRO_0000431367" description="Suppressor of RPS4-RLD 1">
    <location>
        <begin position="2"/>
        <end position="1052"/>
    </location>
</feature>
<feature type="transmembrane region" description="Helical" evidence="1">
    <location>
        <begin position="966"/>
        <end position="986"/>
    </location>
</feature>
<feature type="repeat" description="TPR 1" evidence="1">
    <location>
        <begin position="39"/>
        <end position="72"/>
    </location>
</feature>
<feature type="repeat" description="TPR 2" evidence="1">
    <location>
        <begin position="74"/>
        <end position="106"/>
    </location>
</feature>
<feature type="repeat" description="TPR 3" evidence="1">
    <location>
        <begin position="297"/>
        <end position="330"/>
    </location>
</feature>
<feature type="repeat" description="TPR 4" evidence="1">
    <location>
        <begin position="331"/>
        <end position="364"/>
    </location>
</feature>
<feature type="repeat" description="TPR 5" evidence="1">
    <location>
        <begin position="365"/>
        <end position="398"/>
    </location>
</feature>
<feature type="repeat" description="TPR 6" evidence="1">
    <location>
        <begin position="400"/>
        <end position="432"/>
    </location>
</feature>
<feature type="repeat" description="TPR 7" evidence="1">
    <location>
        <begin position="433"/>
        <end position="466"/>
    </location>
</feature>
<feature type="repeat" description="TPR 8" evidence="1">
    <location>
        <begin position="468"/>
        <end position="500"/>
    </location>
</feature>
<feature type="repeat" description="TPR 9" evidence="1">
    <location>
        <begin position="502"/>
        <end position="534"/>
    </location>
</feature>
<feature type="repeat" description="TPR 10" evidence="1">
    <location>
        <begin position="535"/>
        <end position="567"/>
    </location>
</feature>
<feature type="repeat" description="TPR 11" evidence="1">
    <location>
        <begin position="569"/>
        <end position="591"/>
    </location>
</feature>
<feature type="region of interest" description="Disordered" evidence="2">
    <location>
        <begin position="131"/>
        <end position="181"/>
    </location>
</feature>
<feature type="region of interest" description="Disordered" evidence="2">
    <location>
        <begin position="704"/>
        <end position="739"/>
    </location>
</feature>
<feature type="coiled-coil region" evidence="1">
    <location>
        <begin position="107"/>
        <end position="136"/>
    </location>
</feature>
<feature type="compositionally biased region" description="Basic and acidic residues" evidence="2">
    <location>
        <begin position="146"/>
        <end position="161"/>
    </location>
</feature>
<feature type="compositionally biased region" description="Low complexity" evidence="2">
    <location>
        <begin position="162"/>
        <end position="181"/>
    </location>
</feature>
<feature type="modified residue" description="N-acetylalanine" evidence="17">
    <location>
        <position position="2"/>
    </location>
</feature>
<feature type="splice variant" id="VSP_057256" description="In isoform 2.">
    <original>KRL</original>
    <variation>WVC</variation>
    <location>
        <begin position="881"/>
        <end position="883"/>
    </location>
</feature>
<feature type="splice variant" id="VSP_057257" description="In isoform 2.">
    <location>
        <begin position="884"/>
        <end position="1052"/>
    </location>
</feature>
<keyword id="KW-0007">Acetylation</keyword>
<keyword id="KW-0025">Alternative splicing</keyword>
<keyword id="KW-0175">Coiled coil</keyword>
<keyword id="KW-0963">Cytoplasm</keyword>
<keyword id="KW-0256">Endoplasmic reticulum</keyword>
<keyword id="KW-0472">Membrane</keyword>
<keyword id="KW-0492">Microsome</keyword>
<keyword id="KW-0539">Nucleus</keyword>
<keyword id="KW-0611">Plant defense</keyword>
<keyword id="KW-1185">Reference proteome</keyword>
<keyword id="KW-0677">Repeat</keyword>
<keyword id="KW-0802">TPR repeat</keyword>
<keyword id="KW-0812">Transmembrane</keyword>
<keyword id="KW-1133">Transmembrane helix</keyword>
<organism evidence="16">
    <name type="scientific">Arabidopsis thaliana</name>
    <name type="common">Mouse-ear cress</name>
    <dbReference type="NCBI Taxonomy" id="3702"/>
    <lineage>
        <taxon>Eukaryota</taxon>
        <taxon>Viridiplantae</taxon>
        <taxon>Streptophyta</taxon>
        <taxon>Embryophyta</taxon>
        <taxon>Tracheophyta</taxon>
        <taxon>Spermatophyta</taxon>
        <taxon>Magnoliopsida</taxon>
        <taxon>eudicotyledons</taxon>
        <taxon>Gunneridae</taxon>
        <taxon>Pentapetalae</taxon>
        <taxon>rosids</taxon>
        <taxon>malvids</taxon>
        <taxon>Brassicales</taxon>
        <taxon>Brassicaceae</taxon>
        <taxon>Camelineae</taxon>
        <taxon>Arabidopsis</taxon>
    </lineage>
</organism>
<name>SRFR1_ARATH</name>
<comment type="function">
    <text evidence="3 4 5 6 7 8 9">Negative regulator of effector-triggered immunity associated with the EDS1 resistance pathway (PubMed:15469494, PubMed:18774967, PubMed:19525323, PubMed:19649196, PubMed:20862316, PubMed:21079790). May localize its interactors to a microsomal membrane (PubMed:22158819). May therefore negatively regulate RPS4 and SNC1 translocation to the nucleus (PubMed:21079790). Contributes to the regulation of RPS2 and RPS4 protein levels and negatively regulates SNC1 stability (PubMed:20862316).</text>
</comment>
<comment type="subunit">
    <text evidence="4 7 8 9 10">Multimer (PubMed:18774967). Interacts with EDS1 (PubMed:22158819). Interacts with SNC1 and RPS4 (PubMed:21079790). Interacts (via TPR domain) with SGT1 (via TPR domain) (PubMed:20862316). Interacts with the TCP transcription factors TCP8, TCP14, TCP15, TCP20, TCP22 and TCP23 (PubMed:24689742).</text>
</comment>
<comment type="subcellular location">
    <subcellularLocation>
        <location evidence="4 8">Nucleus</location>
    </subcellularLocation>
    <subcellularLocation>
        <location evidence="4">Cytoplasm</location>
    </subcellularLocation>
    <subcellularLocation>
        <location evidence="4">Cytoplasm</location>
        <location evidence="4">Perinuclear region</location>
    </subcellularLocation>
    <subcellularLocation>
        <location evidence="1">Membrane</location>
        <topology evidence="1">Single-pass membrane protein</topology>
    </subcellularLocation>
    <subcellularLocation>
        <location evidence="8">Microsome</location>
    </subcellularLocation>
    <text evidence="8">Found in microsomes when interacting with SNC1 and RPS4.</text>
</comment>
<comment type="alternative products">
    <event type="alternative splicing"/>
    <isoform>
        <id>F4JS25-1</id>
        <name>1</name>
        <sequence type="displayed"/>
    </isoform>
    <isoform>
        <id>F4JS25-2</id>
        <name>2</name>
        <sequence type="described" ref="VSP_057256 VSP_057257"/>
    </isoform>
</comment>
<comment type="tissue specificity">
    <text evidence="4">Ubiquitous. Not detected in very young flowers and older siliques.</text>
</comment>
<comment type="disruption phenotype">
    <text evidence="8">Severe stunting in cv. Columbia.</text>
</comment>
<comment type="miscellaneous">
    <molecule>Isoform 2</molecule>
    <text evidence="13">May be due to intron retention.</text>
</comment>
<comment type="sequence caution" evidence="13">
    <conflict type="erroneous gene model prediction">
        <sequence resource="EMBL-CDS" id="CAB38213"/>
    </conflict>
</comment>
<comment type="sequence caution" evidence="13">
    <conflict type="erroneous gene model prediction">
        <sequence resource="EMBL-CDS" id="CAB80411"/>
    </conflict>
</comment>
<dbReference type="EMBL" id="AL035601">
    <property type="protein sequence ID" value="CAB38213.1"/>
    <property type="status" value="ALT_SEQ"/>
    <property type="molecule type" value="Genomic_DNA"/>
</dbReference>
<dbReference type="EMBL" id="AL161591">
    <property type="protein sequence ID" value="CAB80411.1"/>
    <property type="status" value="ALT_SEQ"/>
    <property type="molecule type" value="Genomic_DNA"/>
</dbReference>
<dbReference type="EMBL" id="CP002687">
    <property type="protein sequence ID" value="AEE86797.1"/>
    <property type="molecule type" value="Genomic_DNA"/>
</dbReference>
<dbReference type="EMBL" id="BT005966">
    <property type="protein sequence ID" value="AAO64901.1"/>
    <property type="molecule type" value="mRNA"/>
</dbReference>
<dbReference type="EMBL" id="AK117340">
    <property type="protein sequence ID" value="BAC42010.1"/>
    <property type="molecule type" value="mRNA"/>
</dbReference>
<dbReference type="PIR" id="T04740">
    <property type="entry name" value="T04740"/>
</dbReference>
<dbReference type="RefSeq" id="NP_195462.3">
    <molecule id="F4JS25-1"/>
    <property type="nucleotide sequence ID" value="NM_119910.4"/>
</dbReference>
<dbReference type="SMR" id="F4JS25"/>
<dbReference type="BioGRID" id="15182">
    <property type="interactions" value="11"/>
</dbReference>
<dbReference type="FunCoup" id="F4JS25">
    <property type="interactions" value="607"/>
</dbReference>
<dbReference type="IntAct" id="F4JS25">
    <property type="interactions" value="3"/>
</dbReference>
<dbReference type="STRING" id="3702.F4JS25"/>
<dbReference type="iPTMnet" id="F4JS25"/>
<dbReference type="PaxDb" id="3702-AT4G37460.1"/>
<dbReference type="ProteomicsDB" id="226870">
    <molecule id="F4JS25-1"/>
</dbReference>
<dbReference type="EnsemblPlants" id="AT4G37460.1">
    <molecule id="F4JS25-1"/>
    <property type="protein sequence ID" value="AT4G37460.1"/>
    <property type="gene ID" value="AT4G37460"/>
</dbReference>
<dbReference type="GeneID" id="829901"/>
<dbReference type="Gramene" id="AT4G37460.1">
    <molecule id="F4JS25-1"/>
    <property type="protein sequence ID" value="AT4G37460.1"/>
    <property type="gene ID" value="AT4G37460"/>
</dbReference>
<dbReference type="KEGG" id="ath:AT4G37460"/>
<dbReference type="Araport" id="AT4G37460"/>
<dbReference type="TAIR" id="AT4G37460">
    <property type="gene designation" value="SRFR1"/>
</dbReference>
<dbReference type="eggNOG" id="KOG1124">
    <property type="taxonomic scope" value="Eukaryota"/>
</dbReference>
<dbReference type="HOGENOM" id="CLU_014101_0_0_1"/>
<dbReference type="InParanoid" id="F4JS25"/>
<dbReference type="OMA" id="KEMALYT"/>
<dbReference type="PRO" id="PR:F4JS25"/>
<dbReference type="Proteomes" id="UP000006548">
    <property type="component" value="Chromosome 4"/>
</dbReference>
<dbReference type="ExpressionAtlas" id="F4JS25">
    <property type="expression patterns" value="baseline and differential"/>
</dbReference>
<dbReference type="GO" id="GO:0005737">
    <property type="term" value="C:cytoplasm"/>
    <property type="evidence" value="ECO:0000314"/>
    <property type="project" value="TAIR"/>
</dbReference>
<dbReference type="GO" id="GO:0005783">
    <property type="term" value="C:endoplasmic reticulum"/>
    <property type="evidence" value="ECO:0007669"/>
    <property type="project" value="UniProtKB-KW"/>
</dbReference>
<dbReference type="GO" id="GO:0043231">
    <property type="term" value="C:intracellular membrane-bounded organelle"/>
    <property type="evidence" value="ECO:0000314"/>
    <property type="project" value="TAIR"/>
</dbReference>
<dbReference type="GO" id="GO:0016020">
    <property type="term" value="C:membrane"/>
    <property type="evidence" value="ECO:0007669"/>
    <property type="project" value="UniProtKB-SubCell"/>
</dbReference>
<dbReference type="GO" id="GO:0005634">
    <property type="term" value="C:nucleus"/>
    <property type="evidence" value="ECO:0000314"/>
    <property type="project" value="TAIR"/>
</dbReference>
<dbReference type="GO" id="GO:0048471">
    <property type="term" value="C:perinuclear region of cytoplasm"/>
    <property type="evidence" value="ECO:0000314"/>
    <property type="project" value="TAIR"/>
</dbReference>
<dbReference type="GO" id="GO:0060090">
    <property type="term" value="F:molecular adaptor activity"/>
    <property type="evidence" value="ECO:0000304"/>
    <property type="project" value="TAIR"/>
</dbReference>
<dbReference type="GO" id="GO:0042742">
    <property type="term" value="P:defense response to bacterium"/>
    <property type="evidence" value="ECO:0000315"/>
    <property type="project" value="TAIR"/>
</dbReference>
<dbReference type="GO" id="GO:0031348">
    <property type="term" value="P:negative regulation of defense response"/>
    <property type="evidence" value="ECO:0000315"/>
    <property type="project" value="TAIR"/>
</dbReference>
<dbReference type="GO" id="GO:0045892">
    <property type="term" value="P:negative regulation of DNA-templated transcription"/>
    <property type="evidence" value="ECO:0000304"/>
    <property type="project" value="TAIR"/>
</dbReference>
<dbReference type="FunFam" id="1.25.40.10:FF:001685">
    <property type="entry name" value="Suppressor of RPS4-RLD 1"/>
    <property type="match status" value="1"/>
</dbReference>
<dbReference type="FunFam" id="1.25.40.10:FF:001687">
    <property type="entry name" value="Suppressor of RPS4-RLD 1"/>
    <property type="match status" value="1"/>
</dbReference>
<dbReference type="Gene3D" id="1.25.40.10">
    <property type="entry name" value="Tetratricopeptide repeat domain"/>
    <property type="match status" value="4"/>
</dbReference>
<dbReference type="InterPro" id="IPR044650">
    <property type="entry name" value="SRFR1-like"/>
</dbReference>
<dbReference type="InterPro" id="IPR011990">
    <property type="entry name" value="TPR-like_helical_dom_sf"/>
</dbReference>
<dbReference type="InterPro" id="IPR019734">
    <property type="entry name" value="TPR_rpt"/>
</dbReference>
<dbReference type="PANTHER" id="PTHR44749">
    <property type="entry name" value="SUPPRESSOR OF RPS4-RLD 1"/>
    <property type="match status" value="1"/>
</dbReference>
<dbReference type="PANTHER" id="PTHR44749:SF1">
    <property type="entry name" value="TETRATRICOPEPTIDE-LIKE HELICAL DOMAIN-CONTAINING PROTEIN"/>
    <property type="match status" value="1"/>
</dbReference>
<dbReference type="Pfam" id="PF13432">
    <property type="entry name" value="TPR_16"/>
    <property type="match status" value="2"/>
</dbReference>
<dbReference type="Pfam" id="PF13181">
    <property type="entry name" value="TPR_8"/>
    <property type="match status" value="1"/>
</dbReference>
<dbReference type="SMART" id="SM00028">
    <property type="entry name" value="TPR"/>
    <property type="match status" value="10"/>
</dbReference>
<dbReference type="SUPFAM" id="SSF48452">
    <property type="entry name" value="TPR-like"/>
    <property type="match status" value="1"/>
</dbReference>
<dbReference type="PROSITE" id="PS50005">
    <property type="entry name" value="TPR"/>
    <property type="match status" value="7"/>
</dbReference>
<dbReference type="PROSITE" id="PS50293">
    <property type="entry name" value="TPR_REGION"/>
    <property type="match status" value="2"/>
</dbReference>